<organism>
    <name type="scientific">Nostoc sp. (strain PCC 7120 / SAG 25.82 / UTEX 2576)</name>
    <dbReference type="NCBI Taxonomy" id="103690"/>
    <lineage>
        <taxon>Bacteria</taxon>
        <taxon>Bacillati</taxon>
        <taxon>Cyanobacteriota</taxon>
        <taxon>Cyanophyceae</taxon>
        <taxon>Nostocales</taxon>
        <taxon>Nostocaceae</taxon>
        <taxon>Nostoc</taxon>
    </lineage>
</organism>
<keyword id="KW-1185">Reference proteome</keyword>
<keyword id="KW-0687">Ribonucleoprotein</keyword>
<keyword id="KW-0689">Ribosomal protein</keyword>
<name>RL32_NOSS1</name>
<protein>
    <recommendedName>
        <fullName evidence="1">Large ribosomal subunit protein bL32</fullName>
    </recommendedName>
    <alternativeName>
        <fullName evidence="3">50S ribosomal protein L32</fullName>
    </alternativeName>
</protein>
<comment type="similarity">
    <text evidence="1">Belongs to the bacterial ribosomal protein bL32 family.</text>
</comment>
<dbReference type="EMBL" id="BA000019">
    <property type="protein sequence ID" value="BAB75373.1"/>
    <property type="molecule type" value="Genomic_DNA"/>
</dbReference>
<dbReference type="PIR" id="AC2265">
    <property type="entry name" value="AC2265"/>
</dbReference>
<dbReference type="RefSeq" id="WP_010997818.1">
    <property type="nucleotide sequence ID" value="NZ_RSCN01000044.1"/>
</dbReference>
<dbReference type="SMR" id="Q8YQY6"/>
<dbReference type="STRING" id="103690.gene:10495716"/>
<dbReference type="KEGG" id="ana:asl3674"/>
<dbReference type="eggNOG" id="COG0333">
    <property type="taxonomic scope" value="Bacteria"/>
</dbReference>
<dbReference type="OrthoDB" id="541730at2"/>
<dbReference type="Proteomes" id="UP000002483">
    <property type="component" value="Chromosome"/>
</dbReference>
<dbReference type="GO" id="GO:0015934">
    <property type="term" value="C:large ribosomal subunit"/>
    <property type="evidence" value="ECO:0007669"/>
    <property type="project" value="InterPro"/>
</dbReference>
<dbReference type="GO" id="GO:0003735">
    <property type="term" value="F:structural constituent of ribosome"/>
    <property type="evidence" value="ECO:0007669"/>
    <property type="project" value="InterPro"/>
</dbReference>
<dbReference type="GO" id="GO:0006412">
    <property type="term" value="P:translation"/>
    <property type="evidence" value="ECO:0007669"/>
    <property type="project" value="UniProtKB-UniRule"/>
</dbReference>
<dbReference type="Gene3D" id="1.20.5.640">
    <property type="entry name" value="Single helix bin"/>
    <property type="match status" value="1"/>
</dbReference>
<dbReference type="HAMAP" id="MF_00340">
    <property type="entry name" value="Ribosomal_bL32"/>
    <property type="match status" value="1"/>
</dbReference>
<dbReference type="InterPro" id="IPR002677">
    <property type="entry name" value="Ribosomal_bL32"/>
</dbReference>
<dbReference type="InterPro" id="IPR044958">
    <property type="entry name" value="Ribosomal_bL32_plant/cyanobact"/>
</dbReference>
<dbReference type="InterPro" id="IPR011332">
    <property type="entry name" value="Ribosomal_zn-bd"/>
</dbReference>
<dbReference type="NCBIfam" id="TIGR01031">
    <property type="entry name" value="rpmF_bact"/>
    <property type="match status" value="1"/>
</dbReference>
<dbReference type="PANTHER" id="PTHR36083">
    <property type="entry name" value="50S RIBOSOMAL PROTEIN L32, CHLOROPLASTIC"/>
    <property type="match status" value="1"/>
</dbReference>
<dbReference type="PANTHER" id="PTHR36083:SF1">
    <property type="entry name" value="LARGE RIBOSOMAL SUBUNIT PROTEIN BL32C"/>
    <property type="match status" value="1"/>
</dbReference>
<dbReference type="Pfam" id="PF01783">
    <property type="entry name" value="Ribosomal_L32p"/>
    <property type="match status" value="1"/>
</dbReference>
<dbReference type="SUPFAM" id="SSF57829">
    <property type="entry name" value="Zn-binding ribosomal proteins"/>
    <property type="match status" value="1"/>
</dbReference>
<evidence type="ECO:0000255" key="1">
    <source>
        <dbReference type="HAMAP-Rule" id="MF_00340"/>
    </source>
</evidence>
<evidence type="ECO:0000256" key="2">
    <source>
        <dbReference type="SAM" id="MobiDB-lite"/>
    </source>
</evidence>
<evidence type="ECO:0000305" key="3"/>
<reference key="1">
    <citation type="journal article" date="2001" name="DNA Res.">
        <title>Complete genomic sequence of the filamentous nitrogen-fixing cyanobacterium Anabaena sp. strain PCC 7120.</title>
        <authorList>
            <person name="Kaneko T."/>
            <person name="Nakamura Y."/>
            <person name="Wolk C.P."/>
            <person name="Kuritz T."/>
            <person name="Sasamoto S."/>
            <person name="Watanabe A."/>
            <person name="Iriguchi M."/>
            <person name="Ishikawa A."/>
            <person name="Kawashima K."/>
            <person name="Kimura T."/>
            <person name="Kishida Y."/>
            <person name="Kohara M."/>
            <person name="Matsumoto M."/>
            <person name="Matsuno A."/>
            <person name="Muraki A."/>
            <person name="Nakazaki N."/>
            <person name="Shimpo S."/>
            <person name="Sugimoto M."/>
            <person name="Takazawa M."/>
            <person name="Yamada M."/>
            <person name="Yasuda M."/>
            <person name="Tabata S."/>
        </authorList>
    </citation>
    <scope>NUCLEOTIDE SEQUENCE [LARGE SCALE GENOMIC DNA]</scope>
    <source>
        <strain>PCC 7120 / SAG 25.82 / UTEX 2576</strain>
    </source>
</reference>
<accession>Q8YQY6</accession>
<proteinExistence type="inferred from homology"/>
<feature type="chain" id="PRO_0000172299" description="Large ribosomal subunit protein bL32">
    <location>
        <begin position="1"/>
        <end position="57"/>
    </location>
</feature>
<feature type="region of interest" description="Disordered" evidence="2">
    <location>
        <begin position="1"/>
        <end position="23"/>
    </location>
</feature>
<sequence length="57" mass="6502">MAVPKKKTSKSKRDKRRATWRHKAAVEAQKALSLGKSILTGRSTFVYPTPEEEDEEE</sequence>
<gene>
    <name evidence="1" type="primary">rpmF</name>
    <name evidence="1" type="synonym">rpl32</name>
    <name type="ordered locus">asl3674</name>
</gene>